<keyword id="KW-0067">ATP-binding</keyword>
<keyword id="KW-0963">Cytoplasm</keyword>
<keyword id="KW-1015">Disulfide bond</keyword>
<keyword id="KW-0547">Nucleotide-binding</keyword>
<keyword id="KW-1185">Reference proteome</keyword>
<keyword id="KW-0694">RNA-binding</keyword>
<keyword id="KW-0808">Transferase</keyword>
<keyword id="KW-0819">tRNA processing</keyword>
<keyword id="KW-0820">tRNA-binding</keyword>
<proteinExistence type="inferred from homology"/>
<name>MNMA_DESOH</name>
<organism>
    <name type="scientific">Desulfosudis oleivorans (strain DSM 6200 / JCM 39069 / Hxd3)</name>
    <name type="common">Desulfococcus oleovorans</name>
    <dbReference type="NCBI Taxonomy" id="96561"/>
    <lineage>
        <taxon>Bacteria</taxon>
        <taxon>Pseudomonadati</taxon>
        <taxon>Thermodesulfobacteriota</taxon>
        <taxon>Desulfobacteria</taxon>
        <taxon>Desulfobacterales</taxon>
        <taxon>Desulfosudaceae</taxon>
        <taxon>Desulfosudis</taxon>
    </lineage>
</organism>
<feature type="chain" id="PRO_0000349612" description="tRNA-specific 2-thiouridylase MnmA">
    <location>
        <begin position="1"/>
        <end position="358"/>
    </location>
</feature>
<feature type="region of interest" description="Interaction with tRNA" evidence="1">
    <location>
        <begin position="151"/>
        <end position="153"/>
    </location>
</feature>
<feature type="region of interest" description="Interaction with tRNA" evidence="1">
    <location>
        <begin position="306"/>
        <end position="307"/>
    </location>
</feature>
<feature type="active site" description="Nucleophile" evidence="1">
    <location>
        <position position="105"/>
    </location>
</feature>
<feature type="active site" description="Cysteine persulfide intermediate" evidence="1">
    <location>
        <position position="201"/>
    </location>
</feature>
<feature type="binding site" evidence="1">
    <location>
        <begin position="22"/>
        <end position="29"/>
    </location>
    <ligand>
        <name>ATP</name>
        <dbReference type="ChEBI" id="CHEBI:30616"/>
    </ligand>
</feature>
<feature type="binding site" evidence="1">
    <location>
        <position position="48"/>
    </location>
    <ligand>
        <name>ATP</name>
        <dbReference type="ChEBI" id="CHEBI:30616"/>
    </ligand>
</feature>
<feature type="binding site" evidence="1">
    <location>
        <position position="129"/>
    </location>
    <ligand>
        <name>ATP</name>
        <dbReference type="ChEBI" id="CHEBI:30616"/>
    </ligand>
</feature>
<feature type="site" description="Interaction with tRNA" evidence="1">
    <location>
        <position position="130"/>
    </location>
</feature>
<feature type="site" description="Interaction with tRNA" evidence="1">
    <location>
        <position position="339"/>
    </location>
</feature>
<feature type="disulfide bond" description="Alternate" evidence="1">
    <location>
        <begin position="105"/>
        <end position="201"/>
    </location>
</feature>
<sequence length="358" mass="39281">MPLMNPLNPWPLESSNPLIAVLVSGGIDSLVAAHLLKQSGADVTAIHFLTGYEPEDRAGRLEKLFTQMDIPVFIFDCRTVFQSNVVDYFTAAYLRGETPNPCMVCNSRIKFGACMDYARSLGADAVATGHYCRTTKDPDGVRLWKGADPAKEQSYFLAFLSQDQLGRARFPLERMTKDQVRAHAARHGLVPIESKESQDVCFIRGEECADFIEAQVPAIPGPGPIEDMTGRLIGTHSGLHRFTVGQRRGINCPAEQPYYVAALDMARNCLKVGFRQDLFVPVCRVAQVNWIPDRPKGSMNVSVKIRYNQTEVPARLTALGETDAVVEFVTPQFAVAPGQGAVFYDGDAVLGGGIIRAE</sequence>
<evidence type="ECO:0000255" key="1">
    <source>
        <dbReference type="HAMAP-Rule" id="MF_00144"/>
    </source>
</evidence>
<comment type="function">
    <text evidence="1">Catalyzes the 2-thiolation of uridine at the wobble position (U34) of tRNA, leading to the formation of s(2)U34.</text>
</comment>
<comment type="catalytic activity">
    <reaction evidence="1">
        <text>S-sulfanyl-L-cysteinyl-[protein] + uridine(34) in tRNA + AH2 + ATP = 2-thiouridine(34) in tRNA + L-cysteinyl-[protein] + A + AMP + diphosphate + H(+)</text>
        <dbReference type="Rhea" id="RHEA:47032"/>
        <dbReference type="Rhea" id="RHEA-COMP:10131"/>
        <dbReference type="Rhea" id="RHEA-COMP:11726"/>
        <dbReference type="Rhea" id="RHEA-COMP:11727"/>
        <dbReference type="Rhea" id="RHEA-COMP:11728"/>
        <dbReference type="ChEBI" id="CHEBI:13193"/>
        <dbReference type="ChEBI" id="CHEBI:15378"/>
        <dbReference type="ChEBI" id="CHEBI:17499"/>
        <dbReference type="ChEBI" id="CHEBI:29950"/>
        <dbReference type="ChEBI" id="CHEBI:30616"/>
        <dbReference type="ChEBI" id="CHEBI:33019"/>
        <dbReference type="ChEBI" id="CHEBI:61963"/>
        <dbReference type="ChEBI" id="CHEBI:65315"/>
        <dbReference type="ChEBI" id="CHEBI:87170"/>
        <dbReference type="ChEBI" id="CHEBI:456215"/>
        <dbReference type="EC" id="2.8.1.13"/>
    </reaction>
</comment>
<comment type="subcellular location">
    <subcellularLocation>
        <location evidence="1">Cytoplasm</location>
    </subcellularLocation>
</comment>
<comment type="similarity">
    <text evidence="1">Belongs to the MnmA/TRMU family.</text>
</comment>
<accession>A9A0S9</accession>
<reference key="1">
    <citation type="submission" date="2007-10" db="EMBL/GenBank/DDBJ databases">
        <title>Complete sequence of Desulfococcus oleovorans Hxd3.</title>
        <authorList>
            <consortium name="US DOE Joint Genome Institute"/>
            <person name="Copeland A."/>
            <person name="Lucas S."/>
            <person name="Lapidus A."/>
            <person name="Barry K."/>
            <person name="Glavina del Rio T."/>
            <person name="Dalin E."/>
            <person name="Tice H."/>
            <person name="Pitluck S."/>
            <person name="Kiss H."/>
            <person name="Brettin T."/>
            <person name="Bruce D."/>
            <person name="Detter J.C."/>
            <person name="Han C."/>
            <person name="Schmutz J."/>
            <person name="Larimer F."/>
            <person name="Land M."/>
            <person name="Hauser L."/>
            <person name="Kyrpides N."/>
            <person name="Kim E."/>
            <person name="Wawrik B."/>
            <person name="Richardson P."/>
        </authorList>
    </citation>
    <scope>NUCLEOTIDE SEQUENCE [LARGE SCALE GENOMIC DNA]</scope>
    <source>
        <strain>DSM 6200 / JCM 39069 / Hxd3</strain>
    </source>
</reference>
<protein>
    <recommendedName>
        <fullName evidence="1">tRNA-specific 2-thiouridylase MnmA</fullName>
        <ecNumber evidence="1">2.8.1.13</ecNumber>
    </recommendedName>
</protein>
<dbReference type="EC" id="2.8.1.13" evidence="1"/>
<dbReference type="EMBL" id="CP000859">
    <property type="protein sequence ID" value="ABW67554.1"/>
    <property type="molecule type" value="Genomic_DNA"/>
</dbReference>
<dbReference type="SMR" id="A9A0S9"/>
<dbReference type="STRING" id="96561.Dole_1750"/>
<dbReference type="KEGG" id="dol:Dole_1750"/>
<dbReference type="eggNOG" id="COG0482">
    <property type="taxonomic scope" value="Bacteria"/>
</dbReference>
<dbReference type="HOGENOM" id="CLU_035188_0_0_7"/>
<dbReference type="OrthoDB" id="9800696at2"/>
<dbReference type="Proteomes" id="UP000008561">
    <property type="component" value="Chromosome"/>
</dbReference>
<dbReference type="GO" id="GO:0005737">
    <property type="term" value="C:cytoplasm"/>
    <property type="evidence" value="ECO:0007669"/>
    <property type="project" value="UniProtKB-SubCell"/>
</dbReference>
<dbReference type="GO" id="GO:0005524">
    <property type="term" value="F:ATP binding"/>
    <property type="evidence" value="ECO:0007669"/>
    <property type="project" value="UniProtKB-KW"/>
</dbReference>
<dbReference type="GO" id="GO:0000049">
    <property type="term" value="F:tRNA binding"/>
    <property type="evidence" value="ECO:0007669"/>
    <property type="project" value="UniProtKB-KW"/>
</dbReference>
<dbReference type="GO" id="GO:0103016">
    <property type="term" value="F:tRNA-uridine 2-sulfurtransferase activity"/>
    <property type="evidence" value="ECO:0007669"/>
    <property type="project" value="UniProtKB-EC"/>
</dbReference>
<dbReference type="GO" id="GO:0002143">
    <property type="term" value="P:tRNA wobble position uridine thiolation"/>
    <property type="evidence" value="ECO:0007669"/>
    <property type="project" value="TreeGrafter"/>
</dbReference>
<dbReference type="CDD" id="cd01998">
    <property type="entry name" value="MnmA_TRMU-like"/>
    <property type="match status" value="1"/>
</dbReference>
<dbReference type="Gene3D" id="2.30.30.280">
    <property type="entry name" value="Adenine nucleotide alpha hydrolases-like domains"/>
    <property type="match status" value="1"/>
</dbReference>
<dbReference type="Gene3D" id="3.40.50.620">
    <property type="entry name" value="HUPs"/>
    <property type="match status" value="1"/>
</dbReference>
<dbReference type="Gene3D" id="2.40.30.10">
    <property type="entry name" value="Translation factors"/>
    <property type="match status" value="1"/>
</dbReference>
<dbReference type="HAMAP" id="MF_00144">
    <property type="entry name" value="tRNA_thiouridyl_MnmA"/>
    <property type="match status" value="1"/>
</dbReference>
<dbReference type="InterPro" id="IPR004506">
    <property type="entry name" value="MnmA-like"/>
</dbReference>
<dbReference type="InterPro" id="IPR046885">
    <property type="entry name" value="MnmA-like_C"/>
</dbReference>
<dbReference type="InterPro" id="IPR046884">
    <property type="entry name" value="MnmA-like_central"/>
</dbReference>
<dbReference type="InterPro" id="IPR023382">
    <property type="entry name" value="MnmA-like_central_sf"/>
</dbReference>
<dbReference type="InterPro" id="IPR014729">
    <property type="entry name" value="Rossmann-like_a/b/a_fold"/>
</dbReference>
<dbReference type="NCBIfam" id="NF001138">
    <property type="entry name" value="PRK00143.1"/>
    <property type="match status" value="1"/>
</dbReference>
<dbReference type="NCBIfam" id="TIGR00420">
    <property type="entry name" value="trmU"/>
    <property type="match status" value="1"/>
</dbReference>
<dbReference type="PANTHER" id="PTHR11933:SF5">
    <property type="entry name" value="MITOCHONDRIAL TRNA-SPECIFIC 2-THIOURIDYLASE 1"/>
    <property type="match status" value="1"/>
</dbReference>
<dbReference type="PANTHER" id="PTHR11933">
    <property type="entry name" value="TRNA 5-METHYLAMINOMETHYL-2-THIOURIDYLATE -METHYLTRANSFERASE"/>
    <property type="match status" value="1"/>
</dbReference>
<dbReference type="Pfam" id="PF03054">
    <property type="entry name" value="tRNA_Me_trans"/>
    <property type="match status" value="1"/>
</dbReference>
<dbReference type="Pfam" id="PF20258">
    <property type="entry name" value="tRNA_Me_trans_C"/>
    <property type="match status" value="1"/>
</dbReference>
<dbReference type="Pfam" id="PF20259">
    <property type="entry name" value="tRNA_Me_trans_M"/>
    <property type="match status" value="1"/>
</dbReference>
<dbReference type="SUPFAM" id="SSF52402">
    <property type="entry name" value="Adenine nucleotide alpha hydrolases-like"/>
    <property type="match status" value="1"/>
</dbReference>
<gene>
    <name evidence="1" type="primary">mnmA</name>
    <name type="ordered locus">Dole_1750</name>
</gene>